<organism>
    <name type="scientific">Helicobacter pylori (strain P12)</name>
    <dbReference type="NCBI Taxonomy" id="570508"/>
    <lineage>
        <taxon>Bacteria</taxon>
        <taxon>Pseudomonadati</taxon>
        <taxon>Campylobacterota</taxon>
        <taxon>Epsilonproteobacteria</taxon>
        <taxon>Campylobacterales</taxon>
        <taxon>Helicobacteraceae</taxon>
        <taxon>Helicobacter</taxon>
    </lineage>
</organism>
<proteinExistence type="inferred from homology"/>
<protein>
    <recommendedName>
        <fullName evidence="1">UPF0323 lipoprotein HPP12_0232</fullName>
    </recommendedName>
</protein>
<sequence>MKKPYRKISDYAIVGGLSALVMVSIVGCKSNADDKQKEQSSLSQSVQKGAFVILEEQKDKSYKVVEEYPSSRTHIIVRDLQGNERVLSNEEIQKLIKEEEAKIDNGTSKLIQPNTNNGGSNEGSGFGLGSAILGSAAGAILGSYIGNKLFNNPNYQQNAQRTYKSPQAYQRSQNSFSKSAPSASSMGTASKGQSGFFGSSRPTSSPAISSGTRGFNS</sequence>
<reference key="1">
    <citation type="submission" date="2008-10" db="EMBL/GenBank/DDBJ databases">
        <title>The complete genome sequence of Helicobacter pylori strain P12.</title>
        <authorList>
            <person name="Fischer W."/>
            <person name="Windhager L."/>
            <person name="Karnholz A."/>
            <person name="Zeiller M."/>
            <person name="Zimmer R."/>
            <person name="Haas R."/>
        </authorList>
    </citation>
    <scope>NUCLEOTIDE SEQUENCE [LARGE SCALE GENOMIC DNA]</scope>
    <source>
        <strain>P12</strain>
    </source>
</reference>
<name>Y232_HELP2</name>
<feature type="signal peptide" evidence="1">
    <location>
        <begin position="1"/>
        <end position="27"/>
    </location>
</feature>
<feature type="chain" id="PRO_1000145631" description="UPF0323 lipoprotein HPP12_0232">
    <location>
        <begin position="28"/>
        <end position="217"/>
    </location>
</feature>
<feature type="region of interest" description="Disordered" evidence="2">
    <location>
        <begin position="160"/>
        <end position="217"/>
    </location>
</feature>
<feature type="compositionally biased region" description="Polar residues" evidence="2">
    <location>
        <begin position="160"/>
        <end position="171"/>
    </location>
</feature>
<feature type="compositionally biased region" description="Low complexity" evidence="2">
    <location>
        <begin position="172"/>
        <end position="185"/>
    </location>
</feature>
<feature type="compositionally biased region" description="Polar residues" evidence="2">
    <location>
        <begin position="186"/>
        <end position="197"/>
    </location>
</feature>
<feature type="compositionally biased region" description="Low complexity" evidence="2">
    <location>
        <begin position="199"/>
        <end position="210"/>
    </location>
</feature>
<feature type="lipid moiety-binding region" description="N-palmitoyl cysteine" evidence="1">
    <location>
        <position position="28"/>
    </location>
</feature>
<feature type="lipid moiety-binding region" description="S-diacylglycerol cysteine" evidence="1">
    <location>
        <position position="28"/>
    </location>
</feature>
<gene>
    <name type="ordered locus">HPP12_0232</name>
</gene>
<keyword id="KW-1003">Cell membrane</keyword>
<keyword id="KW-0449">Lipoprotein</keyword>
<keyword id="KW-0472">Membrane</keyword>
<keyword id="KW-0564">Palmitate</keyword>
<keyword id="KW-0732">Signal</keyword>
<accession>B6JKG3</accession>
<comment type="subcellular location">
    <subcellularLocation>
        <location evidence="1">Cell membrane</location>
        <topology evidence="1">Lipid-anchor</topology>
    </subcellularLocation>
</comment>
<comment type="similarity">
    <text evidence="1">Belongs to the UPF0323 family.</text>
</comment>
<evidence type="ECO:0000255" key="1">
    <source>
        <dbReference type="HAMAP-Rule" id="MF_01421"/>
    </source>
</evidence>
<evidence type="ECO:0000256" key="2">
    <source>
        <dbReference type="SAM" id="MobiDB-lite"/>
    </source>
</evidence>
<dbReference type="EMBL" id="CP001217">
    <property type="protein sequence ID" value="ACJ07391.1"/>
    <property type="molecule type" value="Genomic_DNA"/>
</dbReference>
<dbReference type="KEGG" id="hpp:HPP12_0232"/>
<dbReference type="HOGENOM" id="CLU_111520_0_0_7"/>
<dbReference type="Proteomes" id="UP000008198">
    <property type="component" value="Chromosome"/>
</dbReference>
<dbReference type="GO" id="GO:0005886">
    <property type="term" value="C:plasma membrane"/>
    <property type="evidence" value="ECO:0007669"/>
    <property type="project" value="UniProtKB-SubCell"/>
</dbReference>
<dbReference type="HAMAP" id="MF_01421">
    <property type="entry name" value="UPF0323"/>
    <property type="match status" value="1"/>
</dbReference>
<dbReference type="InterPro" id="IPR020913">
    <property type="entry name" value="UPF0323"/>
</dbReference>
<dbReference type="NCBIfam" id="NF003146">
    <property type="entry name" value="PRK04081.1"/>
    <property type="match status" value="1"/>
</dbReference>
<dbReference type="PROSITE" id="PS51257">
    <property type="entry name" value="PROKAR_LIPOPROTEIN"/>
    <property type="match status" value="1"/>
</dbReference>